<dbReference type="EMBL" id="BC111682">
    <property type="protein sequence ID" value="AAI11683.1"/>
    <property type="molecule type" value="mRNA"/>
</dbReference>
<dbReference type="RefSeq" id="NP_001039402.1">
    <property type="nucleotide sequence ID" value="NM_001045937.1"/>
</dbReference>
<dbReference type="SMR" id="Q2M2S2"/>
<dbReference type="FunCoup" id="Q2M2S2">
    <property type="interactions" value="542"/>
</dbReference>
<dbReference type="STRING" id="9913.ENSBTAP00000012511"/>
<dbReference type="PaxDb" id="9913-ENSBTAP00000012511"/>
<dbReference type="GeneID" id="506149"/>
<dbReference type="KEGG" id="bta:506149"/>
<dbReference type="CTD" id="91689"/>
<dbReference type="VEuPathDB" id="HostDB:ENSBTAG00000009508"/>
<dbReference type="eggNOG" id="KOG4542">
    <property type="taxonomic scope" value="Eukaryota"/>
</dbReference>
<dbReference type="HOGENOM" id="CLU_172921_1_0_1"/>
<dbReference type="InParanoid" id="Q2M2S2"/>
<dbReference type="OMA" id="NISKHEH"/>
<dbReference type="OrthoDB" id="10039145at2759"/>
<dbReference type="TreeFam" id="TF314649"/>
<dbReference type="Reactome" id="R-BTA-8949215">
    <property type="pathway name" value="Mitochondrial calcium ion transport"/>
</dbReference>
<dbReference type="Reactome" id="R-BTA-8949664">
    <property type="pathway name" value="Processing of SMDT1"/>
</dbReference>
<dbReference type="Reactome" id="R-BTA-9837999">
    <property type="pathway name" value="Mitochondrial protein degradation"/>
</dbReference>
<dbReference type="Proteomes" id="UP000009136">
    <property type="component" value="Chromosome 5"/>
</dbReference>
<dbReference type="Bgee" id="ENSBTAG00000009508">
    <property type="expression patterns" value="Expressed in ileocecal valve and 103 other cell types or tissues"/>
</dbReference>
<dbReference type="GO" id="GO:0005743">
    <property type="term" value="C:mitochondrial inner membrane"/>
    <property type="evidence" value="ECO:0000250"/>
    <property type="project" value="UniProtKB"/>
</dbReference>
<dbReference type="GO" id="GO:1990246">
    <property type="term" value="C:uniplex complex"/>
    <property type="evidence" value="ECO:0000250"/>
    <property type="project" value="UniProtKB"/>
</dbReference>
<dbReference type="GO" id="GO:0099103">
    <property type="term" value="F:channel activator activity"/>
    <property type="evidence" value="ECO:0000250"/>
    <property type="project" value="UniProtKB"/>
</dbReference>
<dbReference type="GO" id="GO:0030674">
    <property type="term" value="F:protein-macromolecule adaptor activity"/>
    <property type="evidence" value="ECO:0000250"/>
    <property type="project" value="UniProtKB"/>
</dbReference>
<dbReference type="GO" id="GO:0036444">
    <property type="term" value="P:calcium import into the mitochondrion"/>
    <property type="evidence" value="ECO:0000250"/>
    <property type="project" value="UniProtKB"/>
</dbReference>
<dbReference type="GO" id="GO:0051560">
    <property type="term" value="P:mitochondrial calcium ion homeostasis"/>
    <property type="evidence" value="ECO:0000250"/>
    <property type="project" value="UniProtKB"/>
</dbReference>
<dbReference type="GO" id="GO:0006851">
    <property type="term" value="P:mitochondrial calcium ion transmembrane transport"/>
    <property type="evidence" value="ECO:0000250"/>
    <property type="project" value="UniProtKB"/>
</dbReference>
<dbReference type="InterPro" id="IPR018782">
    <property type="entry name" value="MCU_reg"/>
</dbReference>
<dbReference type="PANTHER" id="PTHR33904">
    <property type="entry name" value="ESSENTIAL MCU REGULATOR, MITOCHONDRIAL"/>
    <property type="match status" value="1"/>
</dbReference>
<dbReference type="PANTHER" id="PTHR33904:SF1">
    <property type="entry name" value="ESSENTIAL MCU REGULATOR, MITOCHONDRIAL"/>
    <property type="match status" value="1"/>
</dbReference>
<dbReference type="Pfam" id="PF10161">
    <property type="entry name" value="DDDD"/>
    <property type="match status" value="1"/>
</dbReference>
<proteinExistence type="inferred from homology"/>
<comment type="function">
    <text evidence="1">Essential regulatory subunit of the mitochondrial calcium uniporter complex (uniplex), a complex that mediates calcium uptake into mitochondria. Required to bridge the calcium-sensing proteins MICU1 with the calcium-conducting subunit MCU. Acts by mediating activation of MCU and retention of MICU1 to the MCU pore, in order to ensure tight regulation of the uniplex complex and appropriate responses to intracellular calcium signaling.</text>
</comment>
<comment type="subunit">
    <text evidence="1">Component of the uniplex complex, composed of MCU, EMRE/SMDT1, MICU1 and MICU2 (or MICU3) in a 4:4:1:1 stoichiometry (By similarity). The number of EMRE/SMDT1 molecules is hovewer variable, ranging from 1 to 4 copies per uniplex complex, leading to uniplex complexes with distinct gatekeeping profiles (By similarity). Interacts (via its C-terminal poly-Asp tail) with MCUR1; the interaction is direct. Unprocessed form interacts (via transit peptide) with MAIP1 (By similarity).</text>
</comment>
<comment type="subcellular location">
    <subcellularLocation>
        <location evidence="1">Mitochondrion inner membrane</location>
        <topology evidence="1">Single-pass membrane protein</topology>
    </subcellularLocation>
    <text evidence="1">MAIP1 is required to assist sorting of EMRE/SMDT1 into mitochondrion by protecting EMRE/SMDT1 against protein degradation by YME1L1, thereby ensuring SMDT1/EMRE maturation by the mitochondrial processing peptidase (PMPCA and PMPCB).</text>
</comment>
<comment type="domain">
    <text evidence="1">The GXXXX[G/A/S] motif at the C-terminal part of the transmembrane region mediates interaction with MCU and is required to activate the calcium-conducting pore in the uniporter complex.</text>
</comment>
<comment type="domain">
    <text evidence="1">The poly-Asp region at the C-terminus mediates interaction with the polybasic region of MICU1.</text>
</comment>
<comment type="PTM">
    <text evidence="1">Undergoes proteolytic degradation in neurons: degraded by AFG3L2 and SPG7 before SMDT1/EMRE assembly with the uniporter complex, limiting the availability of SMDT1/EMRE for MCU assembly and promoting efficient assembly of gatekeeper subunits with MCU.</text>
</comment>
<comment type="similarity">
    <text evidence="3">Belongs to the SMDT1/EMRE family.</text>
</comment>
<keyword id="KW-0106">Calcium</keyword>
<keyword id="KW-0109">Calcium transport</keyword>
<keyword id="KW-0406">Ion transport</keyword>
<keyword id="KW-0472">Membrane</keyword>
<keyword id="KW-0496">Mitochondrion</keyword>
<keyword id="KW-0999">Mitochondrion inner membrane</keyword>
<keyword id="KW-1185">Reference proteome</keyword>
<keyword id="KW-0809">Transit peptide</keyword>
<keyword id="KW-0812">Transmembrane</keyword>
<keyword id="KW-1133">Transmembrane helix</keyword>
<keyword id="KW-0813">Transport</keyword>
<gene>
    <name evidence="1" type="primary">SMDT1</name>
    <name evidence="1" type="synonym">EMRE</name>
</gene>
<sequence>MASGAARWLALVRVGSGASRSWLSLRKGGDVSAGRSCSGQSLVPTRSVIVTRSGAILPKPVKMSFGLLRVFSIVIPFLYVGTLISKNFAALLEEHDIFVPEDDDDDD</sequence>
<evidence type="ECO:0000250" key="1">
    <source>
        <dbReference type="UniProtKB" id="Q9H4I9"/>
    </source>
</evidence>
<evidence type="ECO:0000255" key="2"/>
<evidence type="ECO:0000305" key="3"/>
<feature type="transit peptide" description="Mitochondrion" evidence="2">
    <location>
        <begin position="1"/>
        <end position="47"/>
    </location>
</feature>
<feature type="chain" id="PRO_0000296322" description="Essential MCU regulator, mitochondrial">
    <location>
        <begin position="48"/>
        <end position="107"/>
    </location>
</feature>
<feature type="topological domain" description="Mitochondrial matrix" evidence="3">
    <location>
        <begin position="48"/>
        <end position="65"/>
    </location>
</feature>
<feature type="transmembrane region" description="Helical" evidence="1">
    <location>
        <begin position="66"/>
        <end position="85"/>
    </location>
</feature>
<feature type="topological domain" description="Mitochondrial intermembrane" evidence="3">
    <location>
        <begin position="86"/>
        <end position="107"/>
    </location>
</feature>
<feature type="short sequence motif" description="GXXXX[G/A/S]" evidence="1">
    <location>
        <begin position="81"/>
        <end position="85"/>
    </location>
</feature>
<accession>Q2M2S2</accession>
<reference key="1">
    <citation type="submission" date="2006-01" db="EMBL/GenBank/DDBJ databases">
        <authorList>
            <consortium name="NIH - Mammalian Gene Collection (MGC) project"/>
        </authorList>
    </citation>
    <scope>NUCLEOTIDE SEQUENCE [LARGE SCALE MRNA]</scope>
    <source>
        <strain>Hereford</strain>
        <tissue>Heart ventricle</tissue>
    </source>
</reference>
<protein>
    <recommendedName>
        <fullName evidence="1">Essential MCU regulator, mitochondrial</fullName>
    </recommendedName>
    <alternativeName>
        <fullName evidence="1">Single-pass membrane protein with aspartate-rich tail 1, mitochondrial</fullName>
    </alternativeName>
</protein>
<organism>
    <name type="scientific">Bos taurus</name>
    <name type="common">Bovine</name>
    <dbReference type="NCBI Taxonomy" id="9913"/>
    <lineage>
        <taxon>Eukaryota</taxon>
        <taxon>Metazoa</taxon>
        <taxon>Chordata</taxon>
        <taxon>Craniata</taxon>
        <taxon>Vertebrata</taxon>
        <taxon>Euteleostomi</taxon>
        <taxon>Mammalia</taxon>
        <taxon>Eutheria</taxon>
        <taxon>Laurasiatheria</taxon>
        <taxon>Artiodactyla</taxon>
        <taxon>Ruminantia</taxon>
        <taxon>Pecora</taxon>
        <taxon>Bovidae</taxon>
        <taxon>Bovinae</taxon>
        <taxon>Bos</taxon>
    </lineage>
</organism>
<name>EMRE_BOVIN</name>